<protein>
    <recommendedName>
        <fullName evidence="6">Hemoglobin and hemoglobin-haptoglobin-binding protein</fullName>
    </recommendedName>
</protein>
<accession>Q47952</accession>
<accession>Q47957</accession>
<keyword id="KW-0998">Cell outer membrane</keyword>
<keyword id="KW-0903">Direct protein sequencing</keyword>
<keyword id="KW-0472">Membrane</keyword>
<keyword id="KW-0675">Receptor</keyword>
<keyword id="KW-1185">Reference proteome</keyword>
<keyword id="KW-0732">Signal</keyword>
<keyword id="KW-0798">TonB box</keyword>
<keyword id="KW-0812">Transmembrane</keyword>
<keyword id="KW-1134">Transmembrane beta strand</keyword>
<keyword id="KW-0813">Transport</keyword>
<keyword id="KW-0843">Virulence</keyword>
<gene>
    <name evidence="4" type="primary">hgbA</name>
    <name evidence="5" type="synonym">hupA</name>
    <name evidence="7" type="ordered locus">HD_2025</name>
</gene>
<reference key="1">
    <citation type="journal article" date="1995" name="Infect. Immun.">
        <title>Characterization of the hgbA locus encoding a hemoglobin receptor from Haemophilus ducreyi.</title>
        <authorList>
            <person name="Elkins C."/>
            <person name="Chen C.J."/>
            <person name="Thomas C.E."/>
        </authorList>
    </citation>
    <scope>NUCLEOTIDE SEQUENCE [GENOMIC DNA]</scope>
    <source>
        <strain>35000HP / ATCC 700724</strain>
    </source>
</reference>
<reference key="2">
    <citation type="journal article" date="1996" name="Infect. Immun.">
        <title>A hemoglobin-binding outer membrane protein is involved in virulence expression by Haemophilus ducreyi in an animal model.</title>
        <authorList>
            <person name="Stevens M.K."/>
            <person name="Porcella S.F."/>
            <person name="Klesney-Tait J."/>
            <person name="Lumbley S."/>
            <person name="Thomas S.E."/>
            <person name="Norgard M.V."/>
            <person name="Radolf J.R."/>
            <person name="Hansen E.J."/>
        </authorList>
    </citation>
    <scope>NUCLEOTIDE SEQUENCE [GENOMIC DNA]</scope>
    <scope>PARTIAL PROTEIN SEQUENCE</scope>
    <scope>FUNCTION</scope>
    <scope>SUBCELLULAR LOCATION</scope>
    <scope>DISRUPTION PHENOTYPE</scope>
    <source>
        <strain>35000HP / ATCC 700724</strain>
    </source>
</reference>
<reference key="3">
    <citation type="submission" date="2003-06" db="EMBL/GenBank/DDBJ databases">
        <title>The complete genome sequence of Haemophilus ducreyi.</title>
        <authorList>
            <person name="Munson R.S. Jr."/>
            <person name="Ray W.C."/>
            <person name="Mahairas G."/>
            <person name="Sabo P."/>
            <person name="Mungur R."/>
            <person name="Johnson L."/>
            <person name="Nguyen D."/>
            <person name="Wang J."/>
            <person name="Forst C."/>
            <person name="Hood L."/>
        </authorList>
    </citation>
    <scope>NUCLEOTIDE SEQUENCE [LARGE SCALE GENOMIC DNA]</scope>
    <source>
        <strain>35000HP / ATCC 700724</strain>
    </source>
</reference>
<reference key="4">
    <citation type="journal article" date="1995" name="Infect. Immun.">
        <title>Identification and purification of a conserved heme-regulated hemoglobin-binding outer membrane protein from Haemophilus ducreyi.</title>
        <authorList>
            <person name="Elkins C."/>
        </authorList>
    </citation>
    <scope>PROTEIN SEQUENCE OF 23-36</scope>
    <scope>FUNCTION</scope>
    <scope>SUBCELLULAR LOCATION</scope>
    <source>
        <strain>35000HP / ATCC 700724</strain>
    </source>
</reference>
<sequence length="972" mass="110921">MKANKLSAITLCILGYAHTVYAESNMQTEKLETIVVSSEDDSVHNKNVGEIKKNAKALSKQQVQDSRDLVRYETGVTVVEKGRFGSSGYAIRGVDENRVAVVVDGLHQAETISSQGFKELFEGYGNFNNTRNGVEVENLKQAVIQKGADAIRTGSGSLGGTVSFESKDARDYLIDKNYHFGYKTGYSSADNQKLHSVTAAGRYSDFDLLAVHTQRHGNELRNYGYRHYDGSVVRKEREKADPYKITKQSSLIKIGYQLNDTNRFTLGYDDSRNTSRGTDWSNAFTSYNGGPFLKDVRHTNDQSNRKNISFVYENFDTNDFWDTLKITHNHQKIKLKARLDEYCDVNGEIDCPAIANPSGLYINDKGIFLDKHDGEITHKKEGEFNNYFDSKGKEVRVKGFNVDSILINCDQYDCSKPMQLLSSTNNGYGGSPNKYIYKTYELFEKTMNNGNGKYAVLEIRSSGHEKFSRVYLPSEKGYVENQWKDRDLNTDTQQYNIDLTKSFKLKSVEHNATYGGLYSEVKKSMTNRAGYEAYNRQWWANIFFGKENNKPNKCQPYNGNSFTTLCSHEDRLFSFLIPVKTKTGALYVTDKIKLNDKVNLDVAYRYDRIKHDPKYIPGTTPKLPTDLILGRFIEFKPKNTYATQDEKNENAEKNAVYLASKKTKFSANSYSATFSFDPMDFLKIQAKYATGFRAPTSDEIYFVFQHPSFSIYPNLYLKAERSKNKEVAITLHKQKSFLTVNLFQTDYKDFLDLAYLKKGSLPYGNGGSQLETLLYQNVNRDKARVKGLEVNSKLHLGDVWRTLDGFNLSYKLSLQKGRMSSKVGEEGKQRDTNKLDTPMNAIQPQTHVVGVGYEHPQEKFGVDMYLTHASAKKEKDTFNMFYDGKDQKDQHIKWRSDRYTLVDLIAYVKPVKNVTLRAGVYNLTNREYGTWDSIRSIRPFGTTNLINQETGKGIKRFNAPGRNFRVNAEITF</sequence>
<organism>
    <name type="scientific">Haemophilus ducreyi (strain 35000HP / ATCC 700724)</name>
    <dbReference type="NCBI Taxonomy" id="233412"/>
    <lineage>
        <taxon>Bacteria</taxon>
        <taxon>Pseudomonadati</taxon>
        <taxon>Pseudomonadota</taxon>
        <taxon>Gammaproteobacteria</taxon>
        <taxon>Pasteurellales</taxon>
        <taxon>Pasteurellaceae</taxon>
        <taxon>Haemophilus</taxon>
    </lineage>
</organism>
<feature type="signal peptide" evidence="2 5">
    <location>
        <begin position="1"/>
        <end position="22"/>
    </location>
</feature>
<feature type="chain" id="PRO_0000034789" description="Hemoglobin and hemoglobin-haptoglobin-binding protein">
    <location>
        <begin position="23"/>
        <end position="972"/>
    </location>
</feature>
<feature type="domain" description="TBDR plug" evidence="1">
    <location>
        <begin position="38"/>
        <end position="167"/>
    </location>
</feature>
<feature type="domain" description="TBDR beta-barrel" evidence="1">
    <location>
        <begin position="175"/>
        <end position="972"/>
    </location>
</feature>
<feature type="short sequence motif" description="TonB box">
    <location>
        <begin position="32"/>
        <end position="39"/>
    </location>
</feature>
<feature type="short sequence motif" description="TonB C-terminal box">
    <location>
        <begin position="955"/>
        <end position="972"/>
    </location>
</feature>
<feature type="sequence conflict" description="In Ref. 1; AAA75311." evidence="6" ref="1">
    <original>A</original>
    <variation>S</variation>
    <location>
        <position position="55"/>
    </location>
</feature>
<feature type="sequence conflict" description="In Ref. 2; AAC44054." evidence="6" ref="2">
    <original>G</original>
    <variation>V</variation>
    <location>
        <position position="181"/>
    </location>
</feature>
<evidence type="ECO:0000255" key="1">
    <source>
        <dbReference type="PROSITE-ProRule" id="PRU01360"/>
    </source>
</evidence>
<evidence type="ECO:0000269" key="2">
    <source>
    </source>
</evidence>
<evidence type="ECO:0000269" key="3">
    <source>
    </source>
</evidence>
<evidence type="ECO:0000303" key="4">
    <source>
    </source>
</evidence>
<evidence type="ECO:0000303" key="5">
    <source>
    </source>
</evidence>
<evidence type="ECO:0000305" key="6"/>
<evidence type="ECO:0000312" key="7">
    <source>
        <dbReference type="EMBL" id="AAP96732.1"/>
    </source>
</evidence>
<proteinExistence type="evidence at protein level"/>
<comment type="function">
    <text evidence="2 3">Acts as a receptor for hemoglobin or the hemoglobin/haptoglobin complex of the host and is required for heme uptake. May be involved in virulence.</text>
</comment>
<comment type="subcellular location">
    <subcellularLocation>
        <location evidence="1 2 3">Cell outer membrane</location>
        <topology evidence="1">Multi-pass membrane protein</topology>
    </subcellularLocation>
</comment>
<comment type="disruption phenotype">
    <text evidence="3">Mutant cannot utilize hemoglobin as the sole source of heme for growth. Mutation attenuates the virulence.</text>
</comment>
<comment type="similarity">
    <text evidence="6">Belongs to the TonB-dependent receptor family. Hemoglobin/haptoglobin binding protein subfamily.</text>
</comment>
<name>HGBA_HAEDU</name>
<dbReference type="EMBL" id="U17281">
    <property type="protein sequence ID" value="AAA75311.1"/>
    <property type="molecule type" value="Genomic_DNA"/>
</dbReference>
<dbReference type="EMBL" id="U34048">
    <property type="protein sequence ID" value="AAC44054.1"/>
    <property type="molecule type" value="Genomic_DNA"/>
</dbReference>
<dbReference type="EMBL" id="AE017143">
    <property type="protein sequence ID" value="AAP96732.1"/>
    <property type="molecule type" value="Genomic_DNA"/>
</dbReference>
<dbReference type="RefSeq" id="WP_010945753.1">
    <property type="nucleotide sequence ID" value="NC_002940.2"/>
</dbReference>
<dbReference type="SMR" id="Q47952"/>
<dbReference type="STRING" id="233412.HD_2025"/>
<dbReference type="KEGG" id="hdu:HD_2025"/>
<dbReference type="eggNOG" id="COG1629">
    <property type="taxonomic scope" value="Bacteria"/>
</dbReference>
<dbReference type="eggNOG" id="COG4771">
    <property type="taxonomic scope" value="Bacteria"/>
</dbReference>
<dbReference type="HOGENOM" id="CLU_008287_19_0_6"/>
<dbReference type="OrthoDB" id="9764669at2"/>
<dbReference type="Proteomes" id="UP000001022">
    <property type="component" value="Chromosome"/>
</dbReference>
<dbReference type="GO" id="GO:0009279">
    <property type="term" value="C:cell outer membrane"/>
    <property type="evidence" value="ECO:0007669"/>
    <property type="project" value="UniProtKB-SubCell"/>
</dbReference>
<dbReference type="GO" id="GO:0015344">
    <property type="term" value="F:siderophore uptake transmembrane transporter activity"/>
    <property type="evidence" value="ECO:0007669"/>
    <property type="project" value="TreeGrafter"/>
</dbReference>
<dbReference type="CDD" id="cd01347">
    <property type="entry name" value="ligand_gated_channel"/>
    <property type="match status" value="1"/>
</dbReference>
<dbReference type="Gene3D" id="2.40.170.20">
    <property type="entry name" value="TonB-dependent receptor, beta-barrel domain"/>
    <property type="match status" value="1"/>
</dbReference>
<dbReference type="Gene3D" id="2.170.130.10">
    <property type="entry name" value="TonB-dependent receptor, plug domain"/>
    <property type="match status" value="1"/>
</dbReference>
<dbReference type="InterPro" id="IPR012910">
    <property type="entry name" value="Plug_dom"/>
</dbReference>
<dbReference type="InterPro" id="IPR037066">
    <property type="entry name" value="Plug_dom_sf"/>
</dbReference>
<dbReference type="InterPro" id="IPR039426">
    <property type="entry name" value="TonB-dep_rcpt-like"/>
</dbReference>
<dbReference type="InterPro" id="IPR000531">
    <property type="entry name" value="TonB-dep_rcpt_b-brl"/>
</dbReference>
<dbReference type="InterPro" id="IPR010949">
    <property type="entry name" value="TonB_Hb/transfer/lactofer_rcpt"/>
</dbReference>
<dbReference type="InterPro" id="IPR036942">
    <property type="entry name" value="TonB_rcpt_b-brl_sf"/>
</dbReference>
<dbReference type="NCBIfam" id="TIGR01786">
    <property type="entry name" value="TonB-hemlactrns"/>
    <property type="match status" value="1"/>
</dbReference>
<dbReference type="PANTHER" id="PTHR30069:SF29">
    <property type="entry name" value="HEMOGLOBIN AND HEMOGLOBIN-HAPTOGLOBIN-BINDING PROTEIN 1-RELATED"/>
    <property type="match status" value="1"/>
</dbReference>
<dbReference type="PANTHER" id="PTHR30069">
    <property type="entry name" value="TONB-DEPENDENT OUTER MEMBRANE RECEPTOR"/>
    <property type="match status" value="1"/>
</dbReference>
<dbReference type="Pfam" id="PF07715">
    <property type="entry name" value="Plug"/>
    <property type="match status" value="1"/>
</dbReference>
<dbReference type="Pfam" id="PF00593">
    <property type="entry name" value="TonB_dep_Rec_b-barrel"/>
    <property type="match status" value="1"/>
</dbReference>
<dbReference type="SUPFAM" id="SSF56935">
    <property type="entry name" value="Porins"/>
    <property type="match status" value="1"/>
</dbReference>
<dbReference type="PROSITE" id="PS52016">
    <property type="entry name" value="TONB_DEPENDENT_REC_3"/>
    <property type="match status" value="1"/>
</dbReference>